<proteinExistence type="evidence at protein level"/>
<accession>Q41116</accession>
<organism>
    <name type="scientific">Phaseolus vulgaris</name>
    <name type="common">Kidney bean</name>
    <name type="synonym">French bean</name>
    <dbReference type="NCBI Taxonomy" id="3885"/>
    <lineage>
        <taxon>Eukaryota</taxon>
        <taxon>Viridiplantae</taxon>
        <taxon>Streptophyta</taxon>
        <taxon>Embryophyta</taxon>
        <taxon>Tracheophyta</taxon>
        <taxon>Spermatophyta</taxon>
        <taxon>Magnoliopsida</taxon>
        <taxon>eudicotyledons</taxon>
        <taxon>Gunneridae</taxon>
        <taxon>Pentapetalae</taxon>
        <taxon>rosids</taxon>
        <taxon>fabids</taxon>
        <taxon>Fabales</taxon>
        <taxon>Fabaceae</taxon>
        <taxon>Papilionoideae</taxon>
        <taxon>50 kb inversion clade</taxon>
        <taxon>NPAAA clade</taxon>
        <taxon>indigoferoid/millettioid clade</taxon>
        <taxon>Phaseoleae</taxon>
        <taxon>Phaseolus</taxon>
    </lineage>
</organism>
<keyword id="KW-0903">Direct protein sequencing</keyword>
<keyword id="KW-1015">Disulfide bond</keyword>
<keyword id="KW-0325">Glycoprotein</keyword>
<keyword id="KW-0430">Lectin</keyword>
<keyword id="KW-0611">Plant defense</keyword>
<keyword id="KW-0708">Seed storage protein</keyword>
<keyword id="KW-0732">Signal</keyword>
<keyword id="KW-0758">Storage protein</keyword>
<keyword id="KW-0800">Toxin</keyword>
<comment type="function">
    <text>Seed storage. This carbohydrate-binding lectin has toxic effects on bean bruchid pests.</text>
</comment>
<comment type="subunit">
    <text>Monomer.</text>
</comment>
<comment type="similarity">
    <text evidence="3">Belongs to the leguminous lectin family.</text>
</comment>
<dbReference type="EMBL" id="Z36970">
    <property type="protein sequence ID" value="CAA85418.1"/>
    <property type="molecule type" value="mRNA"/>
</dbReference>
<dbReference type="PIR" id="S51360">
    <property type="entry name" value="S51360"/>
</dbReference>
<dbReference type="SMR" id="Q41116"/>
<dbReference type="GlyCosmos" id="Q41116">
    <property type="glycosylation" value="2 sites, No reported glycans"/>
</dbReference>
<dbReference type="GO" id="GO:0030246">
    <property type="term" value="F:carbohydrate binding"/>
    <property type="evidence" value="ECO:0007669"/>
    <property type="project" value="UniProtKB-KW"/>
</dbReference>
<dbReference type="GO" id="GO:0045735">
    <property type="term" value="F:nutrient reservoir activity"/>
    <property type="evidence" value="ECO:0007669"/>
    <property type="project" value="UniProtKB-KW"/>
</dbReference>
<dbReference type="GO" id="GO:0090729">
    <property type="term" value="F:toxin activity"/>
    <property type="evidence" value="ECO:0007669"/>
    <property type="project" value="UniProtKB-KW"/>
</dbReference>
<dbReference type="GO" id="GO:0006952">
    <property type="term" value="P:defense response"/>
    <property type="evidence" value="ECO:0007669"/>
    <property type="project" value="UniProtKB-KW"/>
</dbReference>
<dbReference type="CDD" id="cd06899">
    <property type="entry name" value="lectin_legume_LecRK_Arcelin_ConA"/>
    <property type="match status" value="1"/>
</dbReference>
<dbReference type="Gene3D" id="2.60.120.200">
    <property type="match status" value="1"/>
</dbReference>
<dbReference type="InterPro" id="IPR013320">
    <property type="entry name" value="ConA-like_dom_sf"/>
</dbReference>
<dbReference type="InterPro" id="IPR016363">
    <property type="entry name" value="L-lectin"/>
</dbReference>
<dbReference type="InterPro" id="IPR000985">
    <property type="entry name" value="Lectin_LegA_CS"/>
</dbReference>
<dbReference type="InterPro" id="IPR001220">
    <property type="entry name" value="Legume_lectin_dom"/>
</dbReference>
<dbReference type="InterPro" id="IPR050258">
    <property type="entry name" value="Leguminous_Lectin"/>
</dbReference>
<dbReference type="PANTHER" id="PTHR32401">
    <property type="entry name" value="CONCANAVALIN A-LIKE LECTIN FAMILY PROTEIN"/>
    <property type="match status" value="1"/>
</dbReference>
<dbReference type="PANTHER" id="PTHR32401:SF45">
    <property type="entry name" value="LECTIN"/>
    <property type="match status" value="1"/>
</dbReference>
<dbReference type="Pfam" id="PF00139">
    <property type="entry name" value="Lectin_legB"/>
    <property type="match status" value="1"/>
</dbReference>
<dbReference type="PIRSF" id="PIRSF002690">
    <property type="entry name" value="L-type_lectin_plant"/>
    <property type="match status" value="1"/>
</dbReference>
<dbReference type="SUPFAM" id="SSF49899">
    <property type="entry name" value="Concanavalin A-like lectins/glucanases"/>
    <property type="match status" value="1"/>
</dbReference>
<dbReference type="PROSITE" id="PS00308">
    <property type="entry name" value="LECTIN_LEGUME_ALPHA"/>
    <property type="match status" value="1"/>
</dbReference>
<name>AR5B_PHAVU</name>
<sequence length="261" mass="29267">MASSKLLSLALFLVLLTHANSATETSFNFPNFHTDDKLILQGDATISSKGQLRLTGVTPNGDPRVDSMGRAFYSDPIQIKDSNNVASFNTNFTFIIRTKNQSISAYGLAFALVRVNSPPQKKQEFLGIFNTNNPEPNARTVAVVFNTFKNRIDFDKNFIKPYVNENCDFHKYNGEKTDVQITYDSSNNDLRVFLHFTVSQVKCSVSATVHLEKEVDEWVSVGFSPTSGLTEDTTETHDVLSWSFSSKFRNKLSNILLNNIL</sequence>
<reference key="1">
    <citation type="journal article" date="1994" name="Eur. J. Biochem.">
        <title>Isolation and characterisation of arcelin-5 proteins and cDNAs.</title>
        <authorList>
            <person name="Goossens A."/>
            <person name="Geremia R."/>
            <person name="Bauw G."/>
            <person name="van Montagu M."/>
            <person name="Angenon G."/>
        </authorList>
    </citation>
    <scope>NUCLEOTIDE SEQUENCE [MRNA]</scope>
    <scope>PARTIAL PROTEIN SEQUENCE</scope>
    <source>
        <strain>cv. G02771</strain>
        <tissue>Seed</tissue>
    </source>
</reference>
<evidence type="ECO:0000250" key="1"/>
<evidence type="ECO:0000255" key="2"/>
<evidence type="ECO:0000305" key="3"/>
<gene>
    <name type="primary">ARC5B</name>
    <name type="synonym">ARC5</name>
</gene>
<feature type="signal peptide">
    <location>
        <begin position="1"/>
        <end position="21"/>
    </location>
</feature>
<feature type="chain" id="PRO_0000017641" description="Arcelin-5B">
    <location>
        <begin position="22"/>
        <end position="261"/>
    </location>
</feature>
<feature type="glycosylation site" description="N-linked (GlcNAc...) asparagine" evidence="2">
    <location>
        <position position="91"/>
    </location>
</feature>
<feature type="glycosylation site" description="N-linked (GlcNAc...) asparagine" evidence="2">
    <location>
        <position position="100"/>
    </location>
</feature>
<feature type="disulfide bond" evidence="1">
    <location>
        <begin position="167"/>
        <end position="203"/>
    </location>
</feature>
<protein>
    <recommendedName>
        <fullName>Arcelin-5B</fullName>
    </recommendedName>
</protein>